<accession>P0A308</accession>
<accession>P12991</accession>
<reference key="1">
    <citation type="journal article" date="2003" name="Lancet">
        <title>Genome sequence of Vibrio parahaemolyticus: a pathogenic mechanism distinct from that of V. cholerae.</title>
        <authorList>
            <person name="Makino K."/>
            <person name="Oshima K."/>
            <person name="Kurokawa K."/>
            <person name="Yokoyama K."/>
            <person name="Uda T."/>
            <person name="Tagomori K."/>
            <person name="Iijima Y."/>
            <person name="Najima M."/>
            <person name="Nakano M."/>
            <person name="Yamashita A."/>
            <person name="Kubota Y."/>
            <person name="Kimura S."/>
            <person name="Yasunaga T."/>
            <person name="Honda T."/>
            <person name="Shinagawa H."/>
            <person name="Hattori M."/>
            <person name="Iida T."/>
        </authorList>
    </citation>
    <scope>NUCLEOTIDE SEQUENCE [LARGE SCALE GENOMIC DNA]</scope>
    <source>
        <strain>RIMD 2210633</strain>
    </source>
</reference>
<gene>
    <name evidence="2" type="primary">atpE</name>
    <name type="synonym">uncE</name>
    <name type="ordered locus">VP3074</name>
</gene>
<organism>
    <name type="scientific">Vibrio parahaemolyticus serotype O3:K6 (strain RIMD 2210633)</name>
    <dbReference type="NCBI Taxonomy" id="223926"/>
    <lineage>
        <taxon>Bacteria</taxon>
        <taxon>Pseudomonadati</taxon>
        <taxon>Pseudomonadota</taxon>
        <taxon>Gammaproteobacteria</taxon>
        <taxon>Vibrionales</taxon>
        <taxon>Vibrionaceae</taxon>
        <taxon>Vibrio</taxon>
    </lineage>
</organism>
<proteinExistence type="inferred from homology"/>
<sequence length="84" mass="8636">METLLSFSAIAVGIIVGLASLGTAIGFALLGGKFLEGAARQPEMAPMLQVKMFIIAGLLDAVPMIGIVIALLFTFANPFVGQLG</sequence>
<name>ATPL_VIBPA</name>
<evidence type="ECO:0000250" key="1"/>
<evidence type="ECO:0000255" key="2">
    <source>
        <dbReference type="HAMAP-Rule" id="MF_01396"/>
    </source>
</evidence>
<comment type="function">
    <text evidence="2">F(1)F(0) ATP synthase produces ATP from ADP in the presence of a proton or sodium gradient. F-type ATPases consist of two structural domains, F(1) containing the extramembraneous catalytic core and F(0) containing the membrane proton channel, linked together by a central stalk and a peripheral stalk. During catalysis, ATP synthesis in the catalytic domain of F(1) is coupled via a rotary mechanism of the central stalk subunits to proton translocation.</text>
</comment>
<comment type="function">
    <text evidence="2">Key component of the F(0) channel; it plays a direct role in translocation across the membrane. A homomeric c-ring of between 10-14 subunits forms the central stalk rotor element with the F(1) delta and epsilon subunits.</text>
</comment>
<comment type="subunit">
    <text evidence="2">F-type ATPases have 2 components, F(1) - the catalytic core - and F(0) - the membrane proton channel. F(1) has five subunits: alpha(3), beta(3), gamma(1), delta(1), epsilon(1). F(0) has three main subunits: a(1), b(2) and c(10-14). The alpha and beta chains form an alternating ring which encloses part of the gamma chain. F(1) is attached to F(0) by a central stalk formed by the gamma and epsilon chains, while a peripheral stalk is formed by the delta and b chains.</text>
</comment>
<comment type="subcellular location">
    <subcellularLocation>
        <location evidence="2">Cell inner membrane</location>
        <topology evidence="2">Multi-pass membrane protein</topology>
    </subcellularLocation>
</comment>
<comment type="miscellaneous">
    <text evidence="1">Dicyclohexylcarbodiimide (DCDD) binding to the active aspartate residue inhibits ATPase in vitro.</text>
</comment>
<comment type="similarity">
    <text evidence="2">Belongs to the ATPase C chain family.</text>
</comment>
<dbReference type="EMBL" id="BA000031">
    <property type="protein sequence ID" value="BAC61337.1"/>
    <property type="molecule type" value="Genomic_DNA"/>
</dbReference>
<dbReference type="RefSeq" id="NP_799453.1">
    <property type="nucleotide sequence ID" value="NC_004603.1"/>
</dbReference>
<dbReference type="RefSeq" id="WP_002540812.1">
    <property type="nucleotide sequence ID" value="NC_004603.1"/>
</dbReference>
<dbReference type="SMR" id="P0A308"/>
<dbReference type="GeneID" id="97172879"/>
<dbReference type="KEGG" id="vpa:VP3074"/>
<dbReference type="PATRIC" id="fig|223926.6.peg.2960"/>
<dbReference type="eggNOG" id="ENOG5032S3K">
    <property type="taxonomic scope" value="Bacteria"/>
</dbReference>
<dbReference type="HOGENOM" id="CLU_148047_1_0_6"/>
<dbReference type="PRO" id="PR:P0A308"/>
<dbReference type="Proteomes" id="UP000002493">
    <property type="component" value="Chromosome 1"/>
</dbReference>
<dbReference type="GO" id="GO:0005886">
    <property type="term" value="C:plasma membrane"/>
    <property type="evidence" value="ECO:0007669"/>
    <property type="project" value="UniProtKB-SubCell"/>
</dbReference>
<dbReference type="GO" id="GO:0045259">
    <property type="term" value="C:proton-transporting ATP synthase complex"/>
    <property type="evidence" value="ECO:0007669"/>
    <property type="project" value="UniProtKB-KW"/>
</dbReference>
<dbReference type="GO" id="GO:0033177">
    <property type="term" value="C:proton-transporting two-sector ATPase complex, proton-transporting domain"/>
    <property type="evidence" value="ECO:0007669"/>
    <property type="project" value="InterPro"/>
</dbReference>
<dbReference type="GO" id="GO:0008289">
    <property type="term" value="F:lipid binding"/>
    <property type="evidence" value="ECO:0007669"/>
    <property type="project" value="UniProtKB-KW"/>
</dbReference>
<dbReference type="GO" id="GO:0046933">
    <property type="term" value="F:proton-transporting ATP synthase activity, rotational mechanism"/>
    <property type="evidence" value="ECO:0007669"/>
    <property type="project" value="UniProtKB-UniRule"/>
</dbReference>
<dbReference type="CDD" id="cd18185">
    <property type="entry name" value="ATP-synt_Fo_c_ATPE"/>
    <property type="match status" value="1"/>
</dbReference>
<dbReference type="FunFam" id="1.20.20.10:FF:000002">
    <property type="entry name" value="ATP synthase subunit c"/>
    <property type="match status" value="1"/>
</dbReference>
<dbReference type="Gene3D" id="1.20.20.10">
    <property type="entry name" value="F1F0 ATP synthase subunit C"/>
    <property type="match status" value="1"/>
</dbReference>
<dbReference type="HAMAP" id="MF_01396">
    <property type="entry name" value="ATP_synth_c_bact"/>
    <property type="match status" value="1"/>
</dbReference>
<dbReference type="InterPro" id="IPR005953">
    <property type="entry name" value="ATP_synth_csu_bac/chlpt"/>
</dbReference>
<dbReference type="InterPro" id="IPR000454">
    <property type="entry name" value="ATP_synth_F0_csu"/>
</dbReference>
<dbReference type="InterPro" id="IPR020537">
    <property type="entry name" value="ATP_synth_F0_csu_DDCD_BS"/>
</dbReference>
<dbReference type="InterPro" id="IPR038662">
    <property type="entry name" value="ATP_synth_F0_csu_sf"/>
</dbReference>
<dbReference type="InterPro" id="IPR002379">
    <property type="entry name" value="ATPase_proteolipid_c-like_dom"/>
</dbReference>
<dbReference type="InterPro" id="IPR035921">
    <property type="entry name" value="F/V-ATP_Csub_sf"/>
</dbReference>
<dbReference type="NCBIfam" id="TIGR01260">
    <property type="entry name" value="ATP_synt_c"/>
    <property type="match status" value="1"/>
</dbReference>
<dbReference type="NCBIfam" id="NF005363">
    <property type="entry name" value="PRK06876.1"/>
    <property type="match status" value="1"/>
</dbReference>
<dbReference type="Pfam" id="PF00137">
    <property type="entry name" value="ATP-synt_C"/>
    <property type="match status" value="1"/>
</dbReference>
<dbReference type="PRINTS" id="PR00124">
    <property type="entry name" value="ATPASEC"/>
</dbReference>
<dbReference type="SUPFAM" id="SSF81333">
    <property type="entry name" value="F1F0 ATP synthase subunit C"/>
    <property type="match status" value="1"/>
</dbReference>
<dbReference type="PROSITE" id="PS00605">
    <property type="entry name" value="ATPASE_C"/>
    <property type="match status" value="1"/>
</dbReference>
<feature type="chain" id="PRO_0000112177" description="ATP synthase subunit c">
    <location>
        <begin position="1"/>
        <end position="84"/>
    </location>
</feature>
<feature type="transmembrane region" description="Helical" evidence="2">
    <location>
        <begin position="10"/>
        <end position="30"/>
    </location>
</feature>
<feature type="transmembrane region" description="Helical" evidence="2">
    <location>
        <begin position="53"/>
        <end position="73"/>
    </location>
</feature>
<feature type="site" description="Reversibly protonated during proton transport" evidence="2">
    <location>
        <position position="60"/>
    </location>
</feature>
<keyword id="KW-0066">ATP synthesis</keyword>
<keyword id="KW-0997">Cell inner membrane</keyword>
<keyword id="KW-1003">Cell membrane</keyword>
<keyword id="KW-0138">CF(0)</keyword>
<keyword id="KW-0375">Hydrogen ion transport</keyword>
<keyword id="KW-0406">Ion transport</keyword>
<keyword id="KW-0446">Lipid-binding</keyword>
<keyword id="KW-0472">Membrane</keyword>
<keyword id="KW-0812">Transmembrane</keyword>
<keyword id="KW-1133">Transmembrane helix</keyword>
<keyword id="KW-0813">Transport</keyword>
<protein>
    <recommendedName>
        <fullName evidence="2">ATP synthase subunit c</fullName>
    </recommendedName>
    <alternativeName>
        <fullName evidence="2">ATP synthase F(0) sector subunit c</fullName>
    </alternativeName>
    <alternativeName>
        <fullName evidence="2">F-type ATPase subunit c</fullName>
        <shortName evidence="2">F-ATPase subunit c</shortName>
    </alternativeName>
    <alternativeName>
        <fullName evidence="2">Lipid-binding protein</fullName>
    </alternativeName>
</protein>